<dbReference type="EC" id="5.4.99.12" evidence="1"/>
<dbReference type="EMBL" id="CP000459">
    <property type="protein sequence ID" value="ABK10693.1"/>
    <property type="molecule type" value="Genomic_DNA"/>
</dbReference>
<dbReference type="RefSeq" id="WP_011548093.1">
    <property type="nucleotide sequence ID" value="NC_008543.1"/>
</dbReference>
<dbReference type="SMR" id="A0AZ67"/>
<dbReference type="GeneID" id="83050347"/>
<dbReference type="KEGG" id="bch:Bcen2424_3956"/>
<dbReference type="HOGENOM" id="CLU_014673_0_2_4"/>
<dbReference type="GO" id="GO:0003723">
    <property type="term" value="F:RNA binding"/>
    <property type="evidence" value="ECO:0007669"/>
    <property type="project" value="InterPro"/>
</dbReference>
<dbReference type="GO" id="GO:0160147">
    <property type="term" value="F:tRNA pseudouridine(38-40) synthase activity"/>
    <property type="evidence" value="ECO:0007669"/>
    <property type="project" value="UniProtKB-EC"/>
</dbReference>
<dbReference type="GO" id="GO:0031119">
    <property type="term" value="P:tRNA pseudouridine synthesis"/>
    <property type="evidence" value="ECO:0007669"/>
    <property type="project" value="UniProtKB-UniRule"/>
</dbReference>
<dbReference type="CDD" id="cd02570">
    <property type="entry name" value="PseudoU_synth_EcTruA"/>
    <property type="match status" value="1"/>
</dbReference>
<dbReference type="FunFam" id="3.30.70.580:FF:000001">
    <property type="entry name" value="tRNA pseudouridine synthase A"/>
    <property type="match status" value="1"/>
</dbReference>
<dbReference type="Gene3D" id="3.30.70.660">
    <property type="entry name" value="Pseudouridine synthase I, catalytic domain, C-terminal subdomain"/>
    <property type="match status" value="1"/>
</dbReference>
<dbReference type="Gene3D" id="3.30.70.580">
    <property type="entry name" value="Pseudouridine synthase I, catalytic domain, N-terminal subdomain"/>
    <property type="match status" value="1"/>
</dbReference>
<dbReference type="HAMAP" id="MF_00171">
    <property type="entry name" value="TruA"/>
    <property type="match status" value="1"/>
</dbReference>
<dbReference type="InterPro" id="IPR020103">
    <property type="entry name" value="PsdUridine_synth_cat_dom_sf"/>
</dbReference>
<dbReference type="InterPro" id="IPR001406">
    <property type="entry name" value="PsdUridine_synth_TruA"/>
</dbReference>
<dbReference type="InterPro" id="IPR020097">
    <property type="entry name" value="PsdUridine_synth_TruA_a/b_dom"/>
</dbReference>
<dbReference type="InterPro" id="IPR020095">
    <property type="entry name" value="PsdUridine_synth_TruA_C"/>
</dbReference>
<dbReference type="InterPro" id="IPR020094">
    <property type="entry name" value="TruA/RsuA/RluB/E/F_N"/>
</dbReference>
<dbReference type="NCBIfam" id="TIGR00071">
    <property type="entry name" value="hisT_truA"/>
    <property type="match status" value="1"/>
</dbReference>
<dbReference type="PANTHER" id="PTHR11142">
    <property type="entry name" value="PSEUDOURIDYLATE SYNTHASE"/>
    <property type="match status" value="1"/>
</dbReference>
<dbReference type="PANTHER" id="PTHR11142:SF0">
    <property type="entry name" value="TRNA PSEUDOURIDINE SYNTHASE-LIKE 1"/>
    <property type="match status" value="1"/>
</dbReference>
<dbReference type="Pfam" id="PF01416">
    <property type="entry name" value="PseudoU_synth_1"/>
    <property type="match status" value="2"/>
</dbReference>
<dbReference type="PIRSF" id="PIRSF001430">
    <property type="entry name" value="tRNA_psdUrid_synth"/>
    <property type="match status" value="1"/>
</dbReference>
<dbReference type="SUPFAM" id="SSF55120">
    <property type="entry name" value="Pseudouridine synthase"/>
    <property type="match status" value="1"/>
</dbReference>
<proteinExistence type="inferred from homology"/>
<evidence type="ECO:0000255" key="1">
    <source>
        <dbReference type="HAMAP-Rule" id="MF_00171"/>
    </source>
</evidence>
<gene>
    <name evidence="1" type="primary">truA</name>
    <name type="ordered locus">Bcen2424_3956</name>
</gene>
<comment type="function">
    <text evidence="1">Formation of pseudouridine at positions 38, 39 and 40 in the anticodon stem and loop of transfer RNAs.</text>
</comment>
<comment type="catalytic activity">
    <reaction evidence="1">
        <text>uridine(38/39/40) in tRNA = pseudouridine(38/39/40) in tRNA</text>
        <dbReference type="Rhea" id="RHEA:22376"/>
        <dbReference type="Rhea" id="RHEA-COMP:10085"/>
        <dbReference type="Rhea" id="RHEA-COMP:10087"/>
        <dbReference type="ChEBI" id="CHEBI:65314"/>
        <dbReference type="ChEBI" id="CHEBI:65315"/>
        <dbReference type="EC" id="5.4.99.12"/>
    </reaction>
</comment>
<comment type="subunit">
    <text evidence="1">Homodimer.</text>
</comment>
<comment type="similarity">
    <text evidence="1">Belongs to the tRNA pseudouridine synthase TruA family.</text>
</comment>
<feature type="chain" id="PRO_1000017051" description="tRNA pseudouridine synthase A">
    <location>
        <begin position="1"/>
        <end position="270"/>
    </location>
</feature>
<feature type="active site" description="Nucleophile" evidence="1">
    <location>
        <position position="51"/>
    </location>
</feature>
<feature type="binding site" evidence="1">
    <location>
        <position position="109"/>
    </location>
    <ligand>
        <name>substrate</name>
    </ligand>
</feature>
<accession>A0AZ67</accession>
<organism>
    <name type="scientific">Burkholderia cenocepacia (strain HI2424)</name>
    <dbReference type="NCBI Taxonomy" id="331272"/>
    <lineage>
        <taxon>Bacteria</taxon>
        <taxon>Pseudomonadati</taxon>
        <taxon>Pseudomonadota</taxon>
        <taxon>Betaproteobacteria</taxon>
        <taxon>Burkholderiales</taxon>
        <taxon>Burkholderiaceae</taxon>
        <taxon>Burkholderia</taxon>
        <taxon>Burkholderia cepacia complex</taxon>
    </lineage>
</organism>
<name>TRUA_BURCH</name>
<sequence>MRIALGIQYDGAAFCGWQAQPHGKTVQDRLEHALAEFARVPLHTTVAGRTDTGVHGLGQVVHFDTDLEREVFSWVRGTNAFLPSTVSVQWAKPMPDTFHARFSAFERTYYYALYVHPVRSPMLAGRAGWIHTPLDDDAMRAAAAHLIGEHDFSSFRSSECQSKTPVKHLYQIDVRRAGHFIHFRFRANAFLHHMVRNLMGCLVAVGRGRYPADWLADVLAGRDRNLAAPTFMADGLYLAHVGYPAEFAVPPAQLGSVPWSSVWADLDPQT</sequence>
<reference key="1">
    <citation type="submission" date="2006-08" db="EMBL/GenBank/DDBJ databases">
        <title>Complete sequence of chromosome 2 of Burkholderia cenocepacia HI2424.</title>
        <authorList>
            <person name="Copeland A."/>
            <person name="Lucas S."/>
            <person name="Lapidus A."/>
            <person name="Barry K."/>
            <person name="Detter J.C."/>
            <person name="Glavina del Rio T."/>
            <person name="Hammon N."/>
            <person name="Israni S."/>
            <person name="Pitluck S."/>
            <person name="Chain P."/>
            <person name="Malfatti S."/>
            <person name="Shin M."/>
            <person name="Vergez L."/>
            <person name="Schmutz J."/>
            <person name="Larimer F."/>
            <person name="Land M."/>
            <person name="Hauser L."/>
            <person name="Kyrpides N."/>
            <person name="Kim E."/>
            <person name="LiPuma J.J."/>
            <person name="Gonzalez C.F."/>
            <person name="Konstantinidis K."/>
            <person name="Tiedje J.M."/>
            <person name="Richardson P."/>
        </authorList>
    </citation>
    <scope>NUCLEOTIDE SEQUENCE [LARGE SCALE GENOMIC DNA]</scope>
    <source>
        <strain>HI2424</strain>
    </source>
</reference>
<protein>
    <recommendedName>
        <fullName evidence="1">tRNA pseudouridine synthase A</fullName>
        <ecNumber evidence="1">5.4.99.12</ecNumber>
    </recommendedName>
    <alternativeName>
        <fullName evidence="1">tRNA pseudouridine(38-40) synthase</fullName>
    </alternativeName>
    <alternativeName>
        <fullName evidence="1">tRNA pseudouridylate synthase I</fullName>
    </alternativeName>
    <alternativeName>
        <fullName evidence="1">tRNA-uridine isomerase I</fullName>
    </alternativeName>
</protein>
<keyword id="KW-0413">Isomerase</keyword>
<keyword id="KW-0819">tRNA processing</keyword>